<accession>B4RJU3</accession>
<feature type="chain" id="PRO_1000095927" description="N-(5'-phosphoribosyl)anthranilate isomerase">
    <location>
        <begin position="1"/>
        <end position="208"/>
    </location>
</feature>
<gene>
    <name evidence="1" type="primary">trpF</name>
    <name type="ordered locus">NGK_0403</name>
</gene>
<comment type="catalytic activity">
    <reaction evidence="1">
        <text>N-(5-phospho-beta-D-ribosyl)anthranilate = 1-(2-carboxyphenylamino)-1-deoxy-D-ribulose 5-phosphate</text>
        <dbReference type="Rhea" id="RHEA:21540"/>
        <dbReference type="ChEBI" id="CHEBI:18277"/>
        <dbReference type="ChEBI" id="CHEBI:58613"/>
        <dbReference type="EC" id="5.3.1.24"/>
    </reaction>
</comment>
<comment type="pathway">
    <text evidence="1">Amino-acid biosynthesis; L-tryptophan biosynthesis; L-tryptophan from chorismate: step 3/5.</text>
</comment>
<comment type="similarity">
    <text evidence="1">Belongs to the TrpF family.</text>
</comment>
<reference key="1">
    <citation type="journal article" date="2008" name="J. Bacteriol.">
        <title>Complete genome sequence of Neisseria gonorrhoeae NCCP11945.</title>
        <authorList>
            <person name="Chung G.T."/>
            <person name="Yoo J.S."/>
            <person name="Oh H.B."/>
            <person name="Lee Y.S."/>
            <person name="Cha S.H."/>
            <person name="Kim S.J."/>
            <person name="Yoo C.K."/>
        </authorList>
    </citation>
    <scope>NUCLEOTIDE SEQUENCE [LARGE SCALE GENOMIC DNA]</scope>
    <source>
        <strain>NCCP11945</strain>
    </source>
</reference>
<sequence>MRKIRTKICGITTPEDALYAAHAGADALGLVFYPQSPRAIDIIKAQKIAAALPPFVSVVALFINESAQNIRRILAEVPIHIIQFHGDEDDAFCRQFDRPYIKAIRVQTASDIRNAATRFPNAQALLFDAYHPSEYGGTGHRFDWTLLAEYSGKPWVLAGGLTPENVGEAVRITGAEAVDVSGGVEASKGKKDPAKVAAFIATANRLSR</sequence>
<organism>
    <name type="scientific">Neisseria gonorrhoeae (strain NCCP11945)</name>
    <dbReference type="NCBI Taxonomy" id="521006"/>
    <lineage>
        <taxon>Bacteria</taxon>
        <taxon>Pseudomonadati</taxon>
        <taxon>Pseudomonadota</taxon>
        <taxon>Betaproteobacteria</taxon>
        <taxon>Neisseriales</taxon>
        <taxon>Neisseriaceae</taxon>
        <taxon>Neisseria</taxon>
    </lineage>
</organism>
<dbReference type="EC" id="5.3.1.24" evidence="1"/>
<dbReference type="EMBL" id="CP001050">
    <property type="protein sequence ID" value="ACF29094.1"/>
    <property type="molecule type" value="Genomic_DNA"/>
</dbReference>
<dbReference type="RefSeq" id="WP_003698099.1">
    <property type="nucleotide sequence ID" value="NC_011035.1"/>
</dbReference>
<dbReference type="SMR" id="B4RJU3"/>
<dbReference type="KEGG" id="ngk:NGK_0403"/>
<dbReference type="HOGENOM" id="CLU_076364_2_0_4"/>
<dbReference type="UniPathway" id="UPA00035">
    <property type="reaction ID" value="UER00042"/>
</dbReference>
<dbReference type="Proteomes" id="UP000002564">
    <property type="component" value="Chromosome"/>
</dbReference>
<dbReference type="GO" id="GO:0004640">
    <property type="term" value="F:phosphoribosylanthranilate isomerase activity"/>
    <property type="evidence" value="ECO:0007669"/>
    <property type="project" value="UniProtKB-UniRule"/>
</dbReference>
<dbReference type="GO" id="GO:0000162">
    <property type="term" value="P:L-tryptophan biosynthetic process"/>
    <property type="evidence" value="ECO:0007669"/>
    <property type="project" value="UniProtKB-UniRule"/>
</dbReference>
<dbReference type="CDD" id="cd00405">
    <property type="entry name" value="PRAI"/>
    <property type="match status" value="1"/>
</dbReference>
<dbReference type="FunFam" id="3.20.20.70:FF:000075">
    <property type="entry name" value="Tryptophan biosynthesis protein TRP1"/>
    <property type="match status" value="1"/>
</dbReference>
<dbReference type="Gene3D" id="3.20.20.70">
    <property type="entry name" value="Aldolase class I"/>
    <property type="match status" value="1"/>
</dbReference>
<dbReference type="HAMAP" id="MF_00135">
    <property type="entry name" value="PRAI"/>
    <property type="match status" value="1"/>
</dbReference>
<dbReference type="InterPro" id="IPR013785">
    <property type="entry name" value="Aldolase_TIM"/>
</dbReference>
<dbReference type="InterPro" id="IPR001240">
    <property type="entry name" value="PRAI_dom"/>
</dbReference>
<dbReference type="InterPro" id="IPR011060">
    <property type="entry name" value="RibuloseP-bd_barrel"/>
</dbReference>
<dbReference type="InterPro" id="IPR044643">
    <property type="entry name" value="TrpF_fam"/>
</dbReference>
<dbReference type="NCBIfam" id="NF002298">
    <property type="entry name" value="PRK01222.1-4"/>
    <property type="match status" value="1"/>
</dbReference>
<dbReference type="PANTHER" id="PTHR42894">
    <property type="entry name" value="N-(5'-PHOSPHORIBOSYL)ANTHRANILATE ISOMERASE"/>
    <property type="match status" value="1"/>
</dbReference>
<dbReference type="PANTHER" id="PTHR42894:SF1">
    <property type="entry name" value="N-(5'-PHOSPHORIBOSYL)ANTHRANILATE ISOMERASE"/>
    <property type="match status" value="1"/>
</dbReference>
<dbReference type="Pfam" id="PF00697">
    <property type="entry name" value="PRAI"/>
    <property type="match status" value="1"/>
</dbReference>
<dbReference type="SUPFAM" id="SSF51366">
    <property type="entry name" value="Ribulose-phoshate binding barrel"/>
    <property type="match status" value="1"/>
</dbReference>
<name>TRPF_NEIG2</name>
<evidence type="ECO:0000255" key="1">
    <source>
        <dbReference type="HAMAP-Rule" id="MF_00135"/>
    </source>
</evidence>
<proteinExistence type="inferred from homology"/>
<protein>
    <recommendedName>
        <fullName evidence="1">N-(5'-phosphoribosyl)anthranilate isomerase</fullName>
        <shortName evidence="1">PRAI</shortName>
        <ecNumber evidence="1">5.3.1.24</ecNumber>
    </recommendedName>
</protein>
<keyword id="KW-0028">Amino-acid biosynthesis</keyword>
<keyword id="KW-0057">Aromatic amino acid biosynthesis</keyword>
<keyword id="KW-0413">Isomerase</keyword>
<keyword id="KW-0822">Tryptophan biosynthesis</keyword>